<dbReference type="EMBL" id="AL123456">
    <property type="protein sequence ID" value="CCP43014.1"/>
    <property type="molecule type" value="Genomic_DNA"/>
</dbReference>
<dbReference type="PIR" id="B70836">
    <property type="entry name" value="B70836"/>
</dbReference>
<dbReference type="RefSeq" id="NP_214798.1">
    <property type="nucleotide sequence ID" value="NC_000962.3"/>
</dbReference>
<dbReference type="RefSeq" id="WP_003916637.1">
    <property type="nucleotide sequence ID" value="NZ_NVQJ01000026.1"/>
</dbReference>
<dbReference type="PDB" id="6J17">
    <property type="method" value="X-ray"/>
    <property type="resolution" value="1.98 A"/>
    <property type="chains" value="A=1052-1330"/>
</dbReference>
<dbReference type="PDBsum" id="6J17"/>
<dbReference type="SMR" id="P9WNA9"/>
<dbReference type="STRING" id="83332.Rv0284"/>
<dbReference type="PaxDb" id="83332-Rv0284"/>
<dbReference type="DNASU" id="886611"/>
<dbReference type="GeneID" id="886611"/>
<dbReference type="KEGG" id="mtu:Rv0284"/>
<dbReference type="KEGG" id="mtv:RVBD_0284"/>
<dbReference type="TubercuList" id="Rv0284"/>
<dbReference type="eggNOG" id="COG1672">
    <property type="taxonomic scope" value="Bacteria"/>
</dbReference>
<dbReference type="eggNOG" id="COG1674">
    <property type="taxonomic scope" value="Bacteria"/>
</dbReference>
<dbReference type="InParanoid" id="P9WNA9"/>
<dbReference type="OrthoDB" id="9807790at2"/>
<dbReference type="PhylomeDB" id="P9WNA9"/>
<dbReference type="PHI-base" id="PHI:5577"/>
<dbReference type="Proteomes" id="UP000001584">
    <property type="component" value="Chromosome"/>
</dbReference>
<dbReference type="GO" id="GO:0009274">
    <property type="term" value="C:peptidoglycan-based cell wall"/>
    <property type="evidence" value="ECO:0007005"/>
    <property type="project" value="MTBBASE"/>
</dbReference>
<dbReference type="GO" id="GO:0005886">
    <property type="term" value="C:plasma membrane"/>
    <property type="evidence" value="ECO:0007005"/>
    <property type="project" value="MTBBASE"/>
</dbReference>
<dbReference type="GO" id="GO:0005524">
    <property type="term" value="F:ATP binding"/>
    <property type="evidence" value="ECO:0007669"/>
    <property type="project" value="UniProtKB-KW"/>
</dbReference>
<dbReference type="GO" id="GO:0016887">
    <property type="term" value="F:ATP hydrolysis activity"/>
    <property type="evidence" value="ECO:0007669"/>
    <property type="project" value="InterPro"/>
</dbReference>
<dbReference type="GO" id="GO:0003677">
    <property type="term" value="F:DNA binding"/>
    <property type="evidence" value="ECO:0007669"/>
    <property type="project" value="InterPro"/>
</dbReference>
<dbReference type="FunFam" id="3.40.50.300:FF:002817">
    <property type="entry name" value="ESX-3 secretion system protein EccC3"/>
    <property type="match status" value="1"/>
</dbReference>
<dbReference type="Gene3D" id="3.40.50.300">
    <property type="entry name" value="P-loop containing nucleotide triphosphate hydrolases"/>
    <property type="match status" value="3"/>
</dbReference>
<dbReference type="InterPro" id="IPR003593">
    <property type="entry name" value="AAA+_ATPase"/>
</dbReference>
<dbReference type="InterPro" id="IPR023836">
    <property type="entry name" value="EccCa-like_Actinobacteria"/>
</dbReference>
<dbReference type="InterPro" id="IPR023837">
    <property type="entry name" value="EccCb-like_Actinobacteria"/>
</dbReference>
<dbReference type="InterPro" id="IPR050206">
    <property type="entry name" value="FtsK/SpoIIIE/SftA"/>
</dbReference>
<dbReference type="InterPro" id="IPR002543">
    <property type="entry name" value="FtsK_dom"/>
</dbReference>
<dbReference type="InterPro" id="IPR027417">
    <property type="entry name" value="P-loop_NTPase"/>
</dbReference>
<dbReference type="NCBIfam" id="TIGR03924">
    <property type="entry name" value="T7SS_EccC_a"/>
    <property type="match status" value="1"/>
</dbReference>
<dbReference type="NCBIfam" id="TIGR03925">
    <property type="entry name" value="T7SS_EccC_b"/>
    <property type="match status" value="1"/>
</dbReference>
<dbReference type="PANTHER" id="PTHR22683">
    <property type="entry name" value="SPORULATION PROTEIN RELATED"/>
    <property type="match status" value="1"/>
</dbReference>
<dbReference type="PANTHER" id="PTHR22683:SF1">
    <property type="entry name" value="TYPE VII SECRETION SYSTEM PROTEIN ESSC"/>
    <property type="match status" value="1"/>
</dbReference>
<dbReference type="Pfam" id="PF01580">
    <property type="entry name" value="FtsK_SpoIIIE"/>
    <property type="match status" value="2"/>
</dbReference>
<dbReference type="SMART" id="SM00382">
    <property type="entry name" value="AAA"/>
    <property type="match status" value="3"/>
</dbReference>
<dbReference type="SUPFAM" id="SSF52540">
    <property type="entry name" value="P-loop containing nucleoside triphosphate hydrolases"/>
    <property type="match status" value="3"/>
</dbReference>
<dbReference type="PROSITE" id="PS50901">
    <property type="entry name" value="FTSK"/>
    <property type="match status" value="2"/>
</dbReference>
<accession>P9WNA9</accession>
<accession>L0T4X3</accession>
<accession>O53689</accession>
<accession>Q7DA37</accession>
<organism>
    <name type="scientific">Mycobacterium tuberculosis (strain ATCC 25618 / H37Rv)</name>
    <dbReference type="NCBI Taxonomy" id="83332"/>
    <lineage>
        <taxon>Bacteria</taxon>
        <taxon>Bacillati</taxon>
        <taxon>Actinomycetota</taxon>
        <taxon>Actinomycetes</taxon>
        <taxon>Mycobacteriales</taxon>
        <taxon>Mycobacteriaceae</taxon>
        <taxon>Mycobacterium</taxon>
        <taxon>Mycobacterium tuberculosis complex</taxon>
    </lineage>
</organism>
<protein>
    <recommendedName>
        <fullName evidence="10">ESX-3 secretion system protein EccC3</fullName>
    </recommendedName>
    <alternativeName>
        <fullName evidence="10">ESX conserved component C3</fullName>
    </alternativeName>
    <alternativeName>
        <fullName evidence="10">Type VII secretion system protein EccC3</fullName>
        <shortName evidence="10">T7SS protein EccC3</shortName>
    </alternativeName>
</protein>
<name>ECCC3_MYCTU</name>
<proteinExistence type="evidence at protein level"/>
<sequence>MSRLIFEARRRLAPPSSHQGTIIIEAPPELPRVIPPSLLRRALPYLIGILIVGMIVALVATGMRVISPQTLFFPFVLLLAATALYRGNDKKMRTEEVDAERADYLRYLSVVRDNIRAQAAEQRASALWSHPDPTALASVPGSRRQWERDPHDPDFLVLRAGRHTVPLATTLRVNDTADEIDLEPVSHSALRSLLDTQRSIGDVPTGIDLTKVSPITVLGERAQVRAVLRAWIAQAVTWHDPTVLGVALAARDLEGRDWNWLKWLPHVDIPGRLDALGPARNLSTDPDELIALLGPVLADRPAFTGQPTDALRHLLIVVDDPDYDLGASPLAVGRAGVTVVHCSASAPHREQYSDPEKPILRVAHGAIERWQTGGWQPYIDAADQFSADEAAHLARRLSRWDSNPTHAGLRSAATRGASFTTLLGIEDASRLDVPALWAPRRRDEELRVPIGVTGTGEPLMFDLKDEAEGGMGPHGLMIGMTGSGKSQTLMSILLSLLTTHSAERLIVIYADFKGEAGADSFRDFPQVVAVISNMAEKKSLADRFADTLRGEVARREMLLREAGRKVQGSAFNSVLEYENAIAAGHSLPPIPTLFVVADEFTLMLADHPEYAELFDYVARKGRSFRIHILFASQTLDVGKIKDIDKNTAYRIGLKVASPSVSRQIIGVEDAYHIESGKEHKGVGFLVPAPGATPIRFRSTYVDGIYEPPQTAKAVVVQSVPEPKLFTAAAVEPDPGTVIADTDEQEPADPPRKLIATIGEQLARYGPRAPQLWLPPLDETIPLSAALARAGVGPRQWRWPLGEIDRPFEMRRDPLVFDARSSAGNMVIHGGPKSGKSTALQTFILSAASLHSPHEVSFYCLDYGGGQLRALQDLAHVGSVASALEPERIRRTFGELEQLLLSRQQREVFRDRGANGSTPDDGFGEVFLVIDNLYGFGRDNTDQFNTRNPLLARVTELVNVGLAYGIHVIITTPSWLEVPLAMRDGLGLRLELRLHDARDSNVRVVGALRRPADAVPHDQPGRGLTMAAEHFLFAAPELDAQTNPVAAINARYPGMAAPPVRLLPTNLAPHAVGELYRGPDQLVIGQREEDLAPVILDLAANPLLMVFGDARSGKTTLLRHIIRTVREHSTADRVAFTVLDRRLHLVDEPLFPDNEYTANIDRIIPAMLGLANLIEARRPPAGMSAAELSRWTFAGHTHYLIIDDVDQVPDSPAMTGPYIGQRPWTPLIGLLAQAGDLGLRVIVTGRATGSAHLLMTSPLLRRFNDLQATTLMLAGNPADSGKIRGERFARLPAGRAILLTDSDSPTYVQLINPLVDAAAVSGETQQKGSQS</sequence>
<reference key="1">
    <citation type="journal article" date="1998" name="Nature">
        <title>Deciphering the biology of Mycobacterium tuberculosis from the complete genome sequence.</title>
        <authorList>
            <person name="Cole S.T."/>
            <person name="Brosch R."/>
            <person name="Parkhill J."/>
            <person name="Garnier T."/>
            <person name="Churcher C.M."/>
            <person name="Harris D.E."/>
            <person name="Gordon S.V."/>
            <person name="Eiglmeier K."/>
            <person name="Gas S."/>
            <person name="Barry C.E. III"/>
            <person name="Tekaia F."/>
            <person name="Badcock K."/>
            <person name="Basham D."/>
            <person name="Brown D."/>
            <person name="Chillingworth T."/>
            <person name="Connor R."/>
            <person name="Davies R.M."/>
            <person name="Devlin K."/>
            <person name="Feltwell T."/>
            <person name="Gentles S."/>
            <person name="Hamlin N."/>
            <person name="Holroyd S."/>
            <person name="Hornsby T."/>
            <person name="Jagels K."/>
            <person name="Krogh A."/>
            <person name="McLean J."/>
            <person name="Moule S."/>
            <person name="Murphy L.D."/>
            <person name="Oliver S."/>
            <person name="Osborne J."/>
            <person name="Quail M.A."/>
            <person name="Rajandream M.A."/>
            <person name="Rogers J."/>
            <person name="Rutter S."/>
            <person name="Seeger K."/>
            <person name="Skelton S."/>
            <person name="Squares S."/>
            <person name="Squares R."/>
            <person name="Sulston J.E."/>
            <person name="Taylor K."/>
            <person name="Whitehead S."/>
            <person name="Barrell B.G."/>
        </authorList>
    </citation>
    <scope>NUCLEOTIDE SEQUENCE [LARGE SCALE GENOMIC DNA]</scope>
    <source>
        <strain>ATCC 25618 / H37Rv</strain>
    </source>
</reference>
<reference key="2">
    <citation type="journal article" date="2002" name="Infect. Immun.">
        <title>IdeR, an essential gene in Mycobacterium tuberculosis: role of IdeR in iron-dependent gene expression, iron metabolism, and oxidative stress response.</title>
        <authorList>
            <person name="Rodriguez G.M."/>
            <person name="Voskuil M.I."/>
            <person name="Gold B."/>
            <person name="Schoolnik G.K."/>
            <person name="Smith I."/>
        </authorList>
    </citation>
    <scope>INDUCTION</scope>
</reference>
<reference key="3">
    <citation type="journal article" date="2007" name="J. Bacteriol.">
        <title>Global analysis of the Mycobacterium tuberculosis Zur (FurB) regulon.</title>
        <authorList>
            <person name="Maciag A."/>
            <person name="Dainese E."/>
            <person name="Rodriguez G.M."/>
            <person name="Milano A."/>
            <person name="Provvedi R."/>
            <person name="Pasca M.R."/>
            <person name="Smith I."/>
            <person name="Palu G."/>
            <person name="Riccardi G."/>
            <person name="Manganelli R."/>
        </authorList>
    </citation>
    <scope>INDUCTION</scope>
</reference>
<reference key="4">
    <citation type="journal article" date="2008" name="BMC Syst. Biol.">
        <title>targetTB: a target identification pipeline for Mycobacterium tuberculosis through an interactome, reactome and genome-scale structural analysis.</title>
        <authorList>
            <person name="Raman K."/>
            <person name="Yeturu K."/>
            <person name="Chandra N."/>
        </authorList>
    </citation>
    <scope>IDENTIFICATION AS A DRUG TARGET [LARGE SCALE ANALYSIS]</scope>
</reference>
<reference key="5">
    <citation type="journal article" date="2009" name="J. Bacteriol.">
        <title>Characterization of a Mycobacterium tuberculosis ESX-3 conditional mutant: essentiality and rescue by iron and zinc.</title>
        <authorList>
            <person name="Serafini A."/>
            <person name="Boldrin F."/>
            <person name="Palu G."/>
            <person name="Manganelli R."/>
        </authorList>
    </citation>
    <scope>FUNCTION</scope>
    <source>
        <strain>H37Rv</strain>
    </source>
</reference>
<reference key="6">
    <citation type="journal article" date="2009" name="PLoS Pathog.">
        <title>Systematic genetic nomenclature for type VII secretion systems.</title>
        <authorList>
            <person name="Bitter W."/>
            <person name="Houben E.N."/>
            <person name="Bottai D."/>
            <person name="Brodin P."/>
            <person name="Brown E.J."/>
            <person name="Cox J.S."/>
            <person name="Derbyshire K."/>
            <person name="Fortune S.M."/>
            <person name="Gao L.Y."/>
            <person name="Liu J."/>
            <person name="Gey van Pittius N.C."/>
            <person name="Pym A.S."/>
            <person name="Rubin E.J."/>
            <person name="Sherman D.R."/>
            <person name="Cole S.T."/>
            <person name="Brosch R."/>
        </authorList>
    </citation>
    <scope>NOMENCLATURE</scope>
</reference>
<reference key="7">
    <citation type="journal article" date="2011" name="Mol. Cell. Proteomics">
        <title>Proteogenomic analysis of Mycobacterium tuberculosis by high resolution mass spectrometry.</title>
        <authorList>
            <person name="Kelkar D.S."/>
            <person name="Kumar D."/>
            <person name="Kumar P."/>
            <person name="Balakrishnan L."/>
            <person name="Muthusamy B."/>
            <person name="Yadav A.K."/>
            <person name="Shrivastava P."/>
            <person name="Marimuthu A."/>
            <person name="Anand S."/>
            <person name="Sundaram H."/>
            <person name="Kingsbury R."/>
            <person name="Harsha H.C."/>
            <person name="Nair B."/>
            <person name="Prasad T.S."/>
            <person name="Chauhan D.S."/>
            <person name="Katoch K."/>
            <person name="Katoch V.M."/>
            <person name="Kumar P."/>
            <person name="Chaerkady R."/>
            <person name="Ramachandran S."/>
            <person name="Dash D."/>
            <person name="Pandey A."/>
        </authorList>
    </citation>
    <scope>IDENTIFICATION BY MASS SPECTROMETRY [LARGE SCALE ANALYSIS]</scope>
    <source>
        <strain>ATCC 25618 / H37Rv</strain>
    </source>
</reference>
<reference key="8">
    <citation type="journal article" date="2013" name="PLoS ONE">
        <title>The ESX-3 secretion system is necessary for iron and zinc homeostasis in Mycobacterium tuberculosis.</title>
        <authorList>
            <person name="Serafini A."/>
            <person name="Pisu D."/>
            <person name="Palu G."/>
            <person name="Rodriguez G.M."/>
            <person name="Manganelli R."/>
        </authorList>
    </citation>
    <scope>FUNCTION</scope>
</reference>
<gene>
    <name evidence="9" type="primary">eccC3</name>
    <name type="ordered locus">Rv0284</name>
</gene>
<feature type="chain" id="PRO_0000393430" description="ESX-3 secretion system protein EccC3">
    <location>
        <begin position="1"/>
        <end position="1330"/>
    </location>
</feature>
<feature type="transmembrane region" description="Helical" evidence="2">
    <location>
        <begin position="43"/>
        <end position="63"/>
    </location>
</feature>
<feature type="transmembrane region" description="Helical" evidence="2">
    <location>
        <begin position="65"/>
        <end position="85"/>
    </location>
</feature>
<feature type="domain" description="FtsK 1" evidence="3">
    <location>
        <begin position="456"/>
        <end position="662"/>
    </location>
</feature>
<feature type="domain" description="FtsK 2" evidence="3">
    <location>
        <begin position="811"/>
        <end position="1000"/>
    </location>
</feature>
<feature type="domain" description="FtsK 3" evidence="3">
    <location>
        <begin position="1090"/>
        <end position="1280"/>
    </location>
</feature>
<feature type="binding site" evidence="3">
    <location>
        <begin position="479"/>
        <end position="486"/>
    </location>
    <ligand>
        <name>ATP</name>
        <dbReference type="ChEBI" id="CHEBI:30616"/>
    </ligand>
</feature>
<feature type="binding site" evidence="3">
    <location>
        <begin position="829"/>
        <end position="836"/>
    </location>
    <ligand>
        <name>ATP</name>
        <dbReference type="ChEBI" id="CHEBI:30616"/>
    </ligand>
</feature>
<feature type="binding site" evidence="3">
    <location>
        <begin position="1107"/>
        <end position="1114"/>
    </location>
    <ligand>
        <name>ATP</name>
        <dbReference type="ChEBI" id="CHEBI:30616"/>
    </ligand>
</feature>
<feature type="strand" evidence="11">
    <location>
        <begin position="1064"/>
        <end position="1066"/>
    </location>
</feature>
<feature type="turn" evidence="11">
    <location>
        <begin position="1068"/>
        <end position="1071"/>
    </location>
</feature>
<feature type="strand" evidence="11">
    <location>
        <begin position="1080"/>
        <end position="1086"/>
    </location>
</feature>
<feature type="turn" evidence="11">
    <location>
        <begin position="1087"/>
        <end position="1089"/>
    </location>
</feature>
<feature type="strand" evidence="11">
    <location>
        <begin position="1092"/>
        <end position="1096"/>
    </location>
</feature>
<feature type="turn" evidence="11">
    <location>
        <begin position="1097"/>
        <end position="1099"/>
    </location>
</feature>
<feature type="strand" evidence="11">
    <location>
        <begin position="1102"/>
        <end position="1106"/>
    </location>
</feature>
<feature type="helix" evidence="11">
    <location>
        <begin position="1113"/>
        <end position="1126"/>
    </location>
</feature>
<feature type="turn" evidence="11">
    <location>
        <begin position="1130"/>
        <end position="1132"/>
    </location>
</feature>
<feature type="strand" evidence="11">
    <location>
        <begin position="1133"/>
        <end position="1138"/>
    </location>
</feature>
<feature type="turn" evidence="11">
    <location>
        <begin position="1143"/>
        <end position="1146"/>
    </location>
</feature>
<feature type="strand" evidence="11">
    <location>
        <begin position="1154"/>
        <end position="1156"/>
    </location>
</feature>
<feature type="turn" evidence="11">
    <location>
        <begin position="1159"/>
        <end position="1161"/>
    </location>
</feature>
<feature type="helix" evidence="11">
    <location>
        <begin position="1162"/>
        <end position="1174"/>
    </location>
</feature>
<feature type="strand" evidence="11">
    <location>
        <begin position="1183"/>
        <end position="1186"/>
    </location>
</feature>
<feature type="turn" evidence="11">
    <location>
        <begin position="1187"/>
        <end position="1189"/>
    </location>
</feature>
<feature type="strand" evidence="11">
    <location>
        <begin position="1196"/>
        <end position="1201"/>
    </location>
</feature>
<feature type="helix" evidence="11">
    <location>
        <begin position="1204"/>
        <end position="1206"/>
    </location>
</feature>
<feature type="helix" evidence="11">
    <location>
        <begin position="1224"/>
        <end position="1227"/>
    </location>
</feature>
<feature type="helix" evidence="11">
    <location>
        <begin position="1228"/>
        <end position="1235"/>
    </location>
</feature>
<feature type="strand" evidence="11">
    <location>
        <begin position="1238"/>
        <end position="1244"/>
    </location>
</feature>
<feature type="helix" evidence="11">
    <location>
        <begin position="1249"/>
        <end position="1255"/>
    </location>
</feature>
<feature type="helix" evidence="11">
    <location>
        <begin position="1257"/>
        <end position="1264"/>
    </location>
</feature>
<feature type="strand" evidence="11">
    <location>
        <begin position="1268"/>
        <end position="1271"/>
    </location>
</feature>
<feature type="turn" evidence="11">
    <location>
        <begin position="1276"/>
        <end position="1279"/>
    </location>
</feature>
<feature type="strand" evidence="11">
    <location>
        <begin position="1294"/>
        <end position="1298"/>
    </location>
</feature>
<feature type="strand" evidence="11">
    <location>
        <begin position="1300"/>
        <end position="1302"/>
    </location>
</feature>
<feature type="strand" evidence="11">
    <location>
        <begin position="1305"/>
        <end position="1310"/>
    </location>
</feature>
<evidence type="ECO:0000250" key="1">
    <source>
        <dbReference type="UniProtKB" id="B2HST4"/>
    </source>
</evidence>
<evidence type="ECO:0000255" key="2"/>
<evidence type="ECO:0000255" key="3">
    <source>
        <dbReference type="PROSITE-ProRule" id="PRU00289"/>
    </source>
</evidence>
<evidence type="ECO:0000269" key="4">
    <source>
    </source>
</evidence>
<evidence type="ECO:0000269" key="5">
    <source>
    </source>
</evidence>
<evidence type="ECO:0000269" key="6">
    <source>
    </source>
</evidence>
<evidence type="ECO:0000269" key="7">
    <source>
    </source>
</evidence>
<evidence type="ECO:0000269" key="8">
    <source>
    </source>
</evidence>
<evidence type="ECO:0000303" key="9">
    <source>
    </source>
</evidence>
<evidence type="ECO:0000305" key="10"/>
<evidence type="ECO:0007829" key="11">
    <source>
        <dbReference type="PDB" id="6J17"/>
    </source>
</evidence>
<keyword id="KW-0002">3D-structure</keyword>
<keyword id="KW-0067">ATP-binding</keyword>
<keyword id="KW-0997">Cell inner membrane</keyword>
<keyword id="KW-1003">Cell membrane</keyword>
<keyword id="KW-0472">Membrane</keyword>
<keyword id="KW-0547">Nucleotide-binding</keyword>
<keyword id="KW-1185">Reference proteome</keyword>
<keyword id="KW-0677">Repeat</keyword>
<keyword id="KW-0812">Transmembrane</keyword>
<keyword id="KW-1133">Transmembrane helix</keyword>
<keyword id="KW-0813">Transport</keyword>
<comment type="function">
    <text evidence="7 8">Part of the ESX-3 specialized secretion system, which is important for iron and zinc uptake or homeostasis.</text>
</comment>
<comment type="subunit">
    <text evidence="1">Part of the ESX-3 / type VII secretion system (T7SS), which is composed of cytosolic and membrane components. The ESX-3 membrane complex is composed of EccB3, EccC3, EccD3 and EccE3.</text>
</comment>
<comment type="subcellular location">
    <subcellularLocation>
        <location evidence="1">Cell inner membrane</location>
        <topology evidence="2">Multi-pass membrane protein</topology>
    </subcellularLocation>
</comment>
<comment type="induction">
    <text evidence="4 5">Repressed by IdeR in the presence of iron and by Zur in the presence of zinc.</text>
</comment>
<comment type="miscellaneous">
    <text evidence="6">Was identified as a high-confidence drug target.</text>
</comment>